<reference key="1">
    <citation type="submission" date="2006-09" db="EMBL/GenBank/DDBJ databases">
        <authorList>
            <consortium name="The Klebsiella pneumonia Genome Sequencing Project"/>
            <person name="McClelland M."/>
            <person name="Sanderson E.K."/>
            <person name="Spieth J."/>
            <person name="Clifton W.S."/>
            <person name="Latreille P."/>
            <person name="Sabo A."/>
            <person name="Pepin K."/>
            <person name="Bhonagiri V."/>
            <person name="Porwollik S."/>
            <person name="Ali J."/>
            <person name="Wilson R.K."/>
        </authorList>
    </citation>
    <scope>NUCLEOTIDE SEQUENCE [LARGE SCALE GENOMIC DNA]</scope>
    <source>
        <strain>ATCC 700721 / MGH 78578</strain>
    </source>
</reference>
<proteinExistence type="inferred from homology"/>
<sequence length="355" mass="40115">MTQKYLFIDRDGTLISEPPEDFQVDRFDKLAFEPQVIPALLKLQQEGYKLVMITNQDGLGTDSLPQEAFDGPHNLMMQIFASQGVNFEEVLICPHFPGDNCACRKPKTQLVLPWLEEGVLDKSHSYVIGDRATDLELADNMGITGLRYDRETLDWPTICEQLTRSDRYAHVERITKETQVDVKVWLDREGGSKIHTGVGFFDHMLDQIATHGGFRMEVNVGGDLYIDDHHTVEDTGLALGEALKLALGDKRGINRFGFVLPMDECLARCALDISGRPHLEYKADFTYQRVGDLSTEMVEHFFRSLSYTMAVTLHLKTKGKNDHHRVESLFKAFGRTLRQAIRVQGDALPSSKGVL</sequence>
<protein>
    <recommendedName>
        <fullName evidence="1">Histidine biosynthesis bifunctional protein HisB</fullName>
    </recommendedName>
    <domain>
        <recommendedName>
            <fullName evidence="1">Histidinol-phosphatase</fullName>
            <ecNumber evidence="1">3.1.3.15</ecNumber>
        </recommendedName>
    </domain>
    <domain>
        <recommendedName>
            <fullName evidence="1">Imidazoleglycerol-phosphate dehydratase</fullName>
            <shortName evidence="1">IGPD</shortName>
            <ecNumber evidence="1">4.2.1.19</ecNumber>
        </recommendedName>
    </domain>
</protein>
<dbReference type="EC" id="3.1.3.15" evidence="1"/>
<dbReference type="EC" id="4.2.1.19" evidence="1"/>
<dbReference type="EMBL" id="CP000647">
    <property type="protein sequence ID" value="ABR77896.1"/>
    <property type="molecule type" value="Genomic_DNA"/>
</dbReference>
<dbReference type="RefSeq" id="WP_015958686.1">
    <property type="nucleotide sequence ID" value="NC_009648.1"/>
</dbReference>
<dbReference type="SMR" id="A6TBC5"/>
<dbReference type="STRING" id="272620.KPN_02478"/>
<dbReference type="PaxDb" id="272620-KPN_02478"/>
<dbReference type="EnsemblBacteria" id="ABR77896">
    <property type="protein sequence ID" value="ABR77896"/>
    <property type="gene ID" value="KPN_02478"/>
</dbReference>
<dbReference type="KEGG" id="kpn:KPN_02478"/>
<dbReference type="HOGENOM" id="CLU_044308_0_0_6"/>
<dbReference type="UniPathway" id="UPA00031">
    <property type="reaction ID" value="UER00011"/>
</dbReference>
<dbReference type="UniPathway" id="UPA00031">
    <property type="reaction ID" value="UER00013"/>
</dbReference>
<dbReference type="Proteomes" id="UP000000265">
    <property type="component" value="Chromosome"/>
</dbReference>
<dbReference type="GO" id="GO:0005737">
    <property type="term" value="C:cytoplasm"/>
    <property type="evidence" value="ECO:0007669"/>
    <property type="project" value="UniProtKB-SubCell"/>
</dbReference>
<dbReference type="GO" id="GO:0004401">
    <property type="term" value="F:histidinol-phosphatase activity"/>
    <property type="evidence" value="ECO:0007669"/>
    <property type="project" value="UniProtKB-UniRule"/>
</dbReference>
<dbReference type="GO" id="GO:0004424">
    <property type="term" value="F:imidazoleglycerol-phosphate dehydratase activity"/>
    <property type="evidence" value="ECO:0007669"/>
    <property type="project" value="UniProtKB-UniRule"/>
</dbReference>
<dbReference type="GO" id="GO:0046872">
    <property type="term" value="F:metal ion binding"/>
    <property type="evidence" value="ECO:0007669"/>
    <property type="project" value="UniProtKB-KW"/>
</dbReference>
<dbReference type="GO" id="GO:0000105">
    <property type="term" value="P:L-histidine biosynthetic process"/>
    <property type="evidence" value="ECO:0007669"/>
    <property type="project" value="UniProtKB-UniRule"/>
</dbReference>
<dbReference type="CDD" id="cd07503">
    <property type="entry name" value="HAD_HisB-N"/>
    <property type="match status" value="1"/>
</dbReference>
<dbReference type="CDD" id="cd07914">
    <property type="entry name" value="IGPD"/>
    <property type="match status" value="1"/>
</dbReference>
<dbReference type="FunFam" id="3.40.50.1000:FF:000061">
    <property type="entry name" value="Histidine biosynthesis bifunctional protein HisB"/>
    <property type="match status" value="1"/>
</dbReference>
<dbReference type="FunFam" id="3.30.230.40:FF:000001">
    <property type="entry name" value="Imidazoleglycerol-phosphate dehydratase HisB"/>
    <property type="match status" value="1"/>
</dbReference>
<dbReference type="FunFam" id="3.30.230.40:FF:000003">
    <property type="entry name" value="Imidazoleglycerol-phosphate dehydratase HisB"/>
    <property type="match status" value="1"/>
</dbReference>
<dbReference type="Gene3D" id="3.40.50.1000">
    <property type="entry name" value="HAD superfamily/HAD-like"/>
    <property type="match status" value="1"/>
</dbReference>
<dbReference type="Gene3D" id="3.30.230.40">
    <property type="entry name" value="Imidazole glycerol phosphate dehydratase, domain 1"/>
    <property type="match status" value="2"/>
</dbReference>
<dbReference type="HAMAP" id="MF_01022">
    <property type="entry name" value="Bifunc_HisB"/>
    <property type="match status" value="1"/>
</dbReference>
<dbReference type="HAMAP" id="MF_00076">
    <property type="entry name" value="HisB"/>
    <property type="match status" value="1"/>
</dbReference>
<dbReference type="InterPro" id="IPR036412">
    <property type="entry name" value="HAD-like_sf"/>
</dbReference>
<dbReference type="InterPro" id="IPR006549">
    <property type="entry name" value="HAD-SF_hydro_IIIA"/>
</dbReference>
<dbReference type="InterPro" id="IPR023214">
    <property type="entry name" value="HAD_sf"/>
</dbReference>
<dbReference type="InterPro" id="IPR020566">
    <property type="entry name" value="His_synth_bifunc_HisB"/>
</dbReference>
<dbReference type="InterPro" id="IPR005954">
    <property type="entry name" value="HisB_N"/>
</dbReference>
<dbReference type="InterPro" id="IPR006543">
    <property type="entry name" value="Histidinol-phos"/>
</dbReference>
<dbReference type="InterPro" id="IPR038494">
    <property type="entry name" value="IGPD_sf"/>
</dbReference>
<dbReference type="InterPro" id="IPR000807">
    <property type="entry name" value="ImidazoleglycerolP_deHydtase"/>
</dbReference>
<dbReference type="InterPro" id="IPR020565">
    <property type="entry name" value="ImidazoleglycerP_deHydtase_CS"/>
</dbReference>
<dbReference type="InterPro" id="IPR020568">
    <property type="entry name" value="Ribosomal_Su5_D2-typ_SF"/>
</dbReference>
<dbReference type="NCBIfam" id="TIGR01662">
    <property type="entry name" value="HAD-SF-IIIA"/>
    <property type="match status" value="1"/>
</dbReference>
<dbReference type="NCBIfam" id="TIGR01261">
    <property type="entry name" value="hisB_Nterm"/>
    <property type="match status" value="1"/>
</dbReference>
<dbReference type="NCBIfam" id="TIGR01656">
    <property type="entry name" value="Histidinol-ppas"/>
    <property type="match status" value="1"/>
</dbReference>
<dbReference type="NCBIfam" id="NF002111">
    <property type="entry name" value="PRK00951.2-1"/>
    <property type="match status" value="1"/>
</dbReference>
<dbReference type="NCBIfam" id="NF002114">
    <property type="entry name" value="PRK00951.2-4"/>
    <property type="match status" value="1"/>
</dbReference>
<dbReference type="NCBIfam" id="NF003937">
    <property type="entry name" value="PRK05446.1"/>
    <property type="match status" value="1"/>
</dbReference>
<dbReference type="PANTHER" id="PTHR23133:SF2">
    <property type="entry name" value="IMIDAZOLEGLYCEROL-PHOSPHATE DEHYDRATASE"/>
    <property type="match status" value="1"/>
</dbReference>
<dbReference type="PANTHER" id="PTHR23133">
    <property type="entry name" value="IMIDAZOLEGLYCEROL-PHOSPHATE DEHYDRATASE HIS7"/>
    <property type="match status" value="1"/>
</dbReference>
<dbReference type="Pfam" id="PF13242">
    <property type="entry name" value="Hydrolase_like"/>
    <property type="match status" value="1"/>
</dbReference>
<dbReference type="Pfam" id="PF00475">
    <property type="entry name" value="IGPD"/>
    <property type="match status" value="1"/>
</dbReference>
<dbReference type="SUPFAM" id="SSF56784">
    <property type="entry name" value="HAD-like"/>
    <property type="match status" value="1"/>
</dbReference>
<dbReference type="SUPFAM" id="SSF54211">
    <property type="entry name" value="Ribosomal protein S5 domain 2-like"/>
    <property type="match status" value="2"/>
</dbReference>
<dbReference type="PROSITE" id="PS00954">
    <property type="entry name" value="IGP_DEHYDRATASE_1"/>
    <property type="match status" value="1"/>
</dbReference>
<dbReference type="PROSITE" id="PS00955">
    <property type="entry name" value="IGP_DEHYDRATASE_2"/>
    <property type="match status" value="1"/>
</dbReference>
<accession>A6TBC5</accession>
<comment type="catalytic activity">
    <reaction evidence="1">
        <text>D-erythro-1-(imidazol-4-yl)glycerol 3-phosphate = 3-(imidazol-4-yl)-2-oxopropyl phosphate + H2O</text>
        <dbReference type="Rhea" id="RHEA:11040"/>
        <dbReference type="ChEBI" id="CHEBI:15377"/>
        <dbReference type="ChEBI" id="CHEBI:57766"/>
        <dbReference type="ChEBI" id="CHEBI:58278"/>
        <dbReference type="EC" id="4.2.1.19"/>
    </reaction>
</comment>
<comment type="catalytic activity">
    <reaction evidence="1">
        <text>L-histidinol phosphate + H2O = L-histidinol + phosphate</text>
        <dbReference type="Rhea" id="RHEA:14465"/>
        <dbReference type="ChEBI" id="CHEBI:15377"/>
        <dbReference type="ChEBI" id="CHEBI:43474"/>
        <dbReference type="ChEBI" id="CHEBI:57699"/>
        <dbReference type="ChEBI" id="CHEBI:57980"/>
        <dbReference type="EC" id="3.1.3.15"/>
    </reaction>
</comment>
<comment type="cofactor">
    <cofactor evidence="1">
        <name>Mg(2+)</name>
        <dbReference type="ChEBI" id="CHEBI:18420"/>
    </cofactor>
</comment>
<comment type="cofactor">
    <cofactor evidence="1">
        <name>Zn(2+)</name>
        <dbReference type="ChEBI" id="CHEBI:29105"/>
    </cofactor>
</comment>
<comment type="pathway">
    <text evidence="1">Amino-acid biosynthesis; L-histidine biosynthesis; L-histidine from 5-phospho-alpha-D-ribose 1-diphosphate: step 6/9.</text>
</comment>
<comment type="pathway">
    <text evidence="1">Amino-acid biosynthesis; L-histidine biosynthesis; L-histidine from 5-phospho-alpha-D-ribose 1-diphosphate: step 8/9.</text>
</comment>
<comment type="subcellular location">
    <subcellularLocation>
        <location evidence="1">Cytoplasm</location>
    </subcellularLocation>
</comment>
<comment type="similarity">
    <text evidence="1">In the N-terminal section; belongs to the histidinol-phosphatase family.</text>
</comment>
<comment type="similarity">
    <text evidence="1">In the C-terminal section; belongs to the imidazoleglycerol-phosphate dehydratase family.</text>
</comment>
<keyword id="KW-0028">Amino-acid biosynthesis</keyword>
<keyword id="KW-0963">Cytoplasm</keyword>
<keyword id="KW-0368">Histidine biosynthesis</keyword>
<keyword id="KW-0378">Hydrolase</keyword>
<keyword id="KW-0456">Lyase</keyword>
<keyword id="KW-0460">Magnesium</keyword>
<keyword id="KW-0479">Metal-binding</keyword>
<keyword id="KW-0511">Multifunctional enzyme</keyword>
<keyword id="KW-0862">Zinc</keyword>
<feature type="chain" id="PRO_1000063448" description="Histidine biosynthesis bifunctional protein HisB">
    <location>
        <begin position="1"/>
        <end position="355"/>
    </location>
</feature>
<feature type="region of interest" description="Histidinol-phosphatase" evidence="1">
    <location>
        <begin position="1"/>
        <end position="166"/>
    </location>
</feature>
<feature type="region of interest" description="Imidazoleglycerol-phosphate dehydratase" evidence="1">
    <location>
        <begin position="167"/>
        <end position="355"/>
    </location>
</feature>
<feature type="active site" description="Nucleophile" evidence="1">
    <location>
        <position position="9"/>
    </location>
</feature>
<feature type="active site" description="Proton donor" evidence="1">
    <location>
        <position position="11"/>
    </location>
</feature>
<feature type="binding site" evidence="1">
    <location>
        <position position="9"/>
    </location>
    <ligand>
        <name>Mg(2+)</name>
        <dbReference type="ChEBI" id="CHEBI:18420"/>
    </ligand>
</feature>
<feature type="binding site" evidence="1">
    <location>
        <position position="11"/>
    </location>
    <ligand>
        <name>Mg(2+)</name>
        <dbReference type="ChEBI" id="CHEBI:18420"/>
    </ligand>
</feature>
<feature type="binding site" evidence="1">
    <location>
        <position position="93"/>
    </location>
    <ligand>
        <name>Zn(2+)</name>
        <dbReference type="ChEBI" id="CHEBI:29105"/>
    </ligand>
</feature>
<feature type="binding site" evidence="1">
    <location>
        <position position="95"/>
    </location>
    <ligand>
        <name>Zn(2+)</name>
        <dbReference type="ChEBI" id="CHEBI:29105"/>
    </ligand>
</feature>
<feature type="binding site" evidence="1">
    <location>
        <position position="101"/>
    </location>
    <ligand>
        <name>Zn(2+)</name>
        <dbReference type="ChEBI" id="CHEBI:29105"/>
    </ligand>
</feature>
<feature type="binding site" evidence="1">
    <location>
        <position position="103"/>
    </location>
    <ligand>
        <name>Zn(2+)</name>
        <dbReference type="ChEBI" id="CHEBI:29105"/>
    </ligand>
</feature>
<feature type="binding site" evidence="1">
    <location>
        <position position="130"/>
    </location>
    <ligand>
        <name>Mg(2+)</name>
        <dbReference type="ChEBI" id="CHEBI:18420"/>
    </ligand>
</feature>
<gene>
    <name evidence="1" type="primary">hisB</name>
    <name type="ordered locus">KPN78578_24350</name>
    <name type="ORF">KPN_02478</name>
</gene>
<organism>
    <name type="scientific">Klebsiella pneumoniae subsp. pneumoniae (strain ATCC 700721 / MGH 78578)</name>
    <dbReference type="NCBI Taxonomy" id="272620"/>
    <lineage>
        <taxon>Bacteria</taxon>
        <taxon>Pseudomonadati</taxon>
        <taxon>Pseudomonadota</taxon>
        <taxon>Gammaproteobacteria</taxon>
        <taxon>Enterobacterales</taxon>
        <taxon>Enterobacteriaceae</taxon>
        <taxon>Klebsiella/Raoultella group</taxon>
        <taxon>Klebsiella</taxon>
        <taxon>Klebsiella pneumoniae complex</taxon>
    </lineage>
</organism>
<name>HIS7_KLEP7</name>
<evidence type="ECO:0000255" key="1">
    <source>
        <dbReference type="HAMAP-Rule" id="MF_01022"/>
    </source>
</evidence>